<dbReference type="EMBL" id="AC012561">
    <property type="protein sequence ID" value="AAF87884.1"/>
    <property type="status" value="ALT_SEQ"/>
    <property type="molecule type" value="Genomic_DNA"/>
</dbReference>
<dbReference type="EMBL" id="AC079279">
    <property type="protein sequence ID" value="AAG51191.1"/>
    <property type="status" value="ALT_SEQ"/>
    <property type="molecule type" value="Genomic_DNA"/>
</dbReference>
<dbReference type="EMBL" id="CP002684">
    <property type="protein sequence ID" value="AEE32557.1"/>
    <property type="molecule type" value="Genomic_DNA"/>
</dbReference>
<dbReference type="EMBL" id="CP002684">
    <property type="protein sequence ID" value="AEE32558.1"/>
    <property type="molecule type" value="Genomic_DNA"/>
</dbReference>
<dbReference type="EMBL" id="CP002684">
    <property type="protein sequence ID" value="ANM60116.1"/>
    <property type="molecule type" value="Genomic_DNA"/>
</dbReference>
<dbReference type="EMBL" id="AK228745">
    <property type="protein sequence ID" value="BAF00645.1"/>
    <property type="molecule type" value="mRNA"/>
</dbReference>
<dbReference type="PIR" id="E96541">
    <property type="entry name" value="E96541"/>
</dbReference>
<dbReference type="RefSeq" id="NP_001185188.1">
    <molecule id="Q0WQF4-2"/>
    <property type="nucleotide sequence ID" value="NM_001198259.1"/>
</dbReference>
<dbReference type="RefSeq" id="NP_001322424.1">
    <molecule id="Q0WQF4-1"/>
    <property type="nucleotide sequence ID" value="NM_001333440.1"/>
</dbReference>
<dbReference type="RefSeq" id="NP_564573.3">
    <molecule id="Q0WQF4-1"/>
    <property type="nucleotide sequence ID" value="NM_103933.6"/>
</dbReference>
<dbReference type="SMR" id="Q0WQF4"/>
<dbReference type="BioGRID" id="26697">
    <property type="interactions" value="4"/>
</dbReference>
<dbReference type="FunCoup" id="Q0WQF4">
    <property type="interactions" value="4867"/>
</dbReference>
<dbReference type="STRING" id="3702.Q0WQF4"/>
<dbReference type="GlyGen" id="Q0WQF4">
    <property type="glycosylation" value="1 site"/>
</dbReference>
<dbReference type="iPTMnet" id="Q0WQF4"/>
<dbReference type="PaxDb" id="3702-AT1G50500.2"/>
<dbReference type="EnsemblPlants" id="AT1G50500.1">
    <molecule id="Q0WQF4-1"/>
    <property type="protein sequence ID" value="AT1G50500.1"/>
    <property type="gene ID" value="AT1G50500"/>
</dbReference>
<dbReference type="EnsemblPlants" id="AT1G50500.2">
    <molecule id="Q0WQF4-2"/>
    <property type="protein sequence ID" value="AT1G50500.2"/>
    <property type="gene ID" value="AT1G50500"/>
</dbReference>
<dbReference type="EnsemblPlants" id="AT1G50500.3">
    <molecule id="Q0WQF4-1"/>
    <property type="protein sequence ID" value="AT1G50500.3"/>
    <property type="gene ID" value="AT1G50500"/>
</dbReference>
<dbReference type="GeneID" id="841472"/>
<dbReference type="Gramene" id="AT1G50500.1">
    <molecule id="Q0WQF4-1"/>
    <property type="protein sequence ID" value="AT1G50500.1"/>
    <property type="gene ID" value="AT1G50500"/>
</dbReference>
<dbReference type="Gramene" id="AT1G50500.2">
    <molecule id="Q0WQF4-2"/>
    <property type="protein sequence ID" value="AT1G50500.2"/>
    <property type="gene ID" value="AT1G50500"/>
</dbReference>
<dbReference type="Gramene" id="AT1G50500.3">
    <molecule id="Q0WQF4-1"/>
    <property type="protein sequence ID" value="AT1G50500.3"/>
    <property type="gene ID" value="AT1G50500"/>
</dbReference>
<dbReference type="KEGG" id="ath:AT1G50500"/>
<dbReference type="Araport" id="AT1G50500"/>
<dbReference type="TAIR" id="AT1G50500">
    <property type="gene designation" value="HIT1"/>
</dbReference>
<dbReference type="eggNOG" id="KOG2180">
    <property type="taxonomic scope" value="Eukaryota"/>
</dbReference>
<dbReference type="HOGENOM" id="CLU_007339_0_0_1"/>
<dbReference type="InParanoid" id="Q0WQF4"/>
<dbReference type="OrthoDB" id="10261632at2759"/>
<dbReference type="PhylomeDB" id="Q0WQF4"/>
<dbReference type="PRO" id="PR:Q0WQF4"/>
<dbReference type="Proteomes" id="UP000006548">
    <property type="component" value="Chromosome 1"/>
</dbReference>
<dbReference type="ExpressionAtlas" id="Q0WQF4">
    <property type="expression patterns" value="baseline and differential"/>
</dbReference>
<dbReference type="GO" id="GO:0005829">
    <property type="term" value="C:cytosol"/>
    <property type="evidence" value="ECO:0007669"/>
    <property type="project" value="GOC"/>
</dbReference>
<dbReference type="GO" id="GO:0010008">
    <property type="term" value="C:endosome membrane"/>
    <property type="evidence" value="ECO:0007669"/>
    <property type="project" value="UniProtKB-SubCell"/>
</dbReference>
<dbReference type="GO" id="GO:0000938">
    <property type="term" value="C:GARP complex"/>
    <property type="evidence" value="ECO:0000314"/>
    <property type="project" value="UniProtKB"/>
</dbReference>
<dbReference type="GO" id="GO:0000139">
    <property type="term" value="C:Golgi membrane"/>
    <property type="evidence" value="ECO:0000314"/>
    <property type="project" value="UniProtKB"/>
</dbReference>
<dbReference type="GO" id="GO:0005739">
    <property type="term" value="C:mitochondrion"/>
    <property type="evidence" value="ECO:0007005"/>
    <property type="project" value="TAIR"/>
</dbReference>
<dbReference type="GO" id="GO:0010286">
    <property type="term" value="P:heat acclimation"/>
    <property type="evidence" value="ECO:0000315"/>
    <property type="project" value="UniProtKB"/>
</dbReference>
<dbReference type="GO" id="GO:0007009">
    <property type="term" value="P:plasma membrane organization"/>
    <property type="evidence" value="ECO:0000315"/>
    <property type="project" value="UniProtKB"/>
</dbReference>
<dbReference type="GO" id="GO:0015031">
    <property type="term" value="P:protein transport"/>
    <property type="evidence" value="ECO:0007669"/>
    <property type="project" value="UniProtKB-KW"/>
</dbReference>
<dbReference type="GO" id="GO:0009408">
    <property type="term" value="P:response to heat"/>
    <property type="evidence" value="ECO:0000315"/>
    <property type="project" value="TAIR"/>
</dbReference>
<dbReference type="GO" id="GO:0006970">
    <property type="term" value="P:response to osmotic stress"/>
    <property type="evidence" value="ECO:0000315"/>
    <property type="project" value="TAIR"/>
</dbReference>
<dbReference type="GO" id="GO:0042147">
    <property type="term" value="P:retrograde transport, endosome to Golgi"/>
    <property type="evidence" value="ECO:0007669"/>
    <property type="project" value="InterPro"/>
</dbReference>
<dbReference type="GO" id="GO:0006890">
    <property type="term" value="P:retrograde vesicle-mediated transport, Golgi to endoplasmic reticulum"/>
    <property type="evidence" value="ECO:0000250"/>
    <property type="project" value="TAIR"/>
</dbReference>
<dbReference type="FunFam" id="1.10.357.110:FF:000002">
    <property type="entry name" value="Vacuolar protein sorting-associated protein 53 A"/>
    <property type="match status" value="1"/>
</dbReference>
<dbReference type="Gene3D" id="1.10.357.110">
    <property type="entry name" value="Vacuolar protein sorting-associated protein 53, C-terminus"/>
    <property type="match status" value="1"/>
</dbReference>
<dbReference type="InterPro" id="IPR039766">
    <property type="entry name" value="Vps53"/>
</dbReference>
<dbReference type="InterPro" id="IPR031745">
    <property type="entry name" value="Vps53_C"/>
</dbReference>
<dbReference type="InterPro" id="IPR038260">
    <property type="entry name" value="Vps53_C_sf"/>
</dbReference>
<dbReference type="InterPro" id="IPR007234">
    <property type="entry name" value="Vps53_N"/>
</dbReference>
<dbReference type="PANTHER" id="PTHR12820:SF0">
    <property type="entry name" value="VACUOLAR PROTEIN SORTING-ASSOCIATED PROTEIN 53 HOMOLOG"/>
    <property type="match status" value="1"/>
</dbReference>
<dbReference type="PANTHER" id="PTHR12820">
    <property type="entry name" value="VACUOLAR SORTING PROTEIN 53"/>
    <property type="match status" value="1"/>
</dbReference>
<dbReference type="Pfam" id="PF16854">
    <property type="entry name" value="VPS53_C"/>
    <property type="match status" value="1"/>
</dbReference>
<dbReference type="Pfam" id="PF04100">
    <property type="entry name" value="Vps53_N"/>
    <property type="match status" value="1"/>
</dbReference>
<keyword id="KW-0025">Alternative splicing</keyword>
<keyword id="KW-0175">Coiled coil</keyword>
<keyword id="KW-0963">Cytoplasm</keyword>
<keyword id="KW-0967">Endosome</keyword>
<keyword id="KW-0333">Golgi apparatus</keyword>
<keyword id="KW-0472">Membrane</keyword>
<keyword id="KW-0653">Protein transport</keyword>
<keyword id="KW-1185">Reference proteome</keyword>
<keyword id="KW-0813">Transport</keyword>
<sequence length="828" mass="92530">MDKSSALEYINQMFPTEASLTGVEPLMQKIQGEIRRVDASILSAVRQQSNSGTKAKEDLADATRAVEELSHKIQEIKSKAEQSEAMVQEICRDIKKLDFAKKNITTTITALHRLTMLVSAVEQLQVMASKRQYKEAAAQLEAVNQLCNHFEAYRDVPKITELREKLNNIKQILKSHVFSDFSSLGTGKETEETNLLQKLSDSCLVVDALEPSVREELVNNFCSRELTSYEQIFEGAELAKLDKTERRYAWIKRRIRTNEEIWKIFPASWHVPYRLCIQFCKQTRKQVESILVNMKEKPVVAILLLALQSTVEFEKELEKKFGGGVPTKDIEDDIEEIGTWEDNSQNISKIRKKYEKKFAASQETEENGFQQEKTGNKDLSVTGAGFNFRGMISSCFEPHLTPYIELEEKTLMDDLEKIVQEESWDVEDGSQNNVLSSSTQLFSNIKKSLKRCNTLSKNQTLFNLFKVFQRVLKAYATKLFFKLPKGGTGIVAAATGMDGQIKVSERDERVICYIVNSAEYCHKTSGELAENVSEIIDPHYADGVDMSEVQDEFSAVITKALVTLVLGLETKFDTEMAVMTRVPWSTLESVGDQSGYVNGINTVLSGSIPVLGKLLTPVYFQFFLDKLASSLGPRFYANIFRCKQLSETGAQQMLLDTQAVKSILLEIPSLARQTSTAASYSKFVSREMSRAEALLKVILSPIDSVADTYRALFPEGTPMEFQRILELKGLKKADQQSILDDFNKHGPGFTQQSVAAAMPQPMPTPPAPPLAITNPATAAGFIANSEDVLTRAAALGRGAASTGFKKFIALTEAAKDRKDGPLRRLFNA</sequence>
<protein>
    <recommendedName>
        <fullName>Vacuolar protein sorting-associated protein 53 A</fullName>
        <shortName>AtVPS53</shortName>
    </recommendedName>
    <alternativeName>
        <fullName>Protein HEAT-INTOLERANT 1</fullName>
    </alternativeName>
</protein>
<feature type="chain" id="PRO_0000424845" description="Vacuolar protein sorting-associated protein 53 A">
    <location>
        <begin position="1"/>
        <end position="828"/>
    </location>
</feature>
<feature type="coiled-coil region" evidence="2">
    <location>
        <begin position="53"/>
        <end position="152"/>
    </location>
</feature>
<feature type="splice variant" id="VSP_053514" description="In isoform 2." evidence="9">
    <original>P</original>
    <variation>PTVSAYVTAFTMIFKCVFSF</variation>
    <location>
        <position position="15"/>
    </location>
</feature>
<feature type="mutagenesis site" description="In hit1-1; reduced tolerance to both heat and water stress, lethal at 37 degrees Celsius. Altered vesicle trafficking leading in changes in the plasma membrane components. Less stable plasma membrane under heat stress conditions, leading to heat intolerance; this sensitivity to heat depends more of the duration than of the intensity of the stress." evidence="4 6 7 8">
    <original>S</original>
    <variation>Y</variation>
    <location>
        <position position="393"/>
    </location>
</feature>
<evidence type="ECO:0000250" key="1"/>
<evidence type="ECO:0000255" key="2"/>
<evidence type="ECO:0000269" key="3">
    <source>
    </source>
</evidence>
<evidence type="ECO:0000269" key="4">
    <source>
    </source>
</evidence>
<evidence type="ECO:0000269" key="5">
    <source>
    </source>
</evidence>
<evidence type="ECO:0000269" key="6">
    <source>
    </source>
</evidence>
<evidence type="ECO:0000269" key="7">
    <source>
    </source>
</evidence>
<evidence type="ECO:0000269" key="8">
    <source ref="4"/>
</evidence>
<evidence type="ECO:0000305" key="9"/>
<proteinExistence type="evidence at protein level"/>
<organism>
    <name type="scientific">Arabidopsis thaliana</name>
    <name type="common">Mouse-ear cress</name>
    <dbReference type="NCBI Taxonomy" id="3702"/>
    <lineage>
        <taxon>Eukaryota</taxon>
        <taxon>Viridiplantae</taxon>
        <taxon>Streptophyta</taxon>
        <taxon>Embryophyta</taxon>
        <taxon>Tracheophyta</taxon>
        <taxon>Spermatophyta</taxon>
        <taxon>Magnoliopsida</taxon>
        <taxon>eudicotyledons</taxon>
        <taxon>Gunneridae</taxon>
        <taxon>Pentapetalae</taxon>
        <taxon>rosids</taxon>
        <taxon>malvids</taxon>
        <taxon>Brassicales</taxon>
        <taxon>Brassicaceae</taxon>
        <taxon>Camelineae</taxon>
        <taxon>Arabidopsis</taxon>
    </lineage>
</organism>
<comment type="function">
    <text evidence="1 4 5 6 7 8">Acts as a component of the GARP complex that is involved in retrograde transport from early and late endosomes to the trans-Golgi network (TGN). The GARP complex facilitates tethering as well as SNARE complex assembly at the Golgi (By similarity). Required for vesicle trafficking involved in plasma membrane protein composition. Probably involved in pollen tube elongation and other polar growth. Confers basal tolerance to long-term heat stress and osmotic stress, by acclimation of the plasma membrane.</text>
</comment>
<comment type="subunit">
    <text evidence="6">Component of the Golgi-associated retrograde protein (GARP) complex, composed by VPS52, VPS53 and VPS54. Interacts directly with VPS52 and VPS54.</text>
</comment>
<comment type="subcellular location">
    <subcellularLocation>
        <location evidence="6">Cytoplasm</location>
    </subcellularLocation>
    <subcellularLocation>
        <location evidence="6">Golgi apparatus membrane</location>
        <topology evidence="6">Peripheral membrane protein</topology>
    </subcellularLocation>
    <subcellularLocation>
        <location evidence="6">Golgi apparatus</location>
        <location evidence="6">trans-Golgi network membrane</location>
        <topology evidence="6">Peripheral membrane protein</topology>
    </subcellularLocation>
    <subcellularLocation>
        <location evidence="1">Endosome membrane</location>
        <topology evidence="1">Peripheral membrane protein</topology>
    </subcellularLocation>
    <text>Localized in the GARP complex in the Golgi and post-Golgi compartments.</text>
</comment>
<comment type="alternative products">
    <event type="alternative splicing"/>
    <isoform>
        <id>Q0WQF4-1</id>
        <name>1</name>
        <sequence type="displayed"/>
    </isoform>
    <isoform>
        <id>Q0WQF4-2</id>
        <name>2</name>
        <sequence type="described" ref="VSP_053514"/>
    </isoform>
</comment>
<comment type="tissue specificity">
    <text evidence="3 4">Present in pollen. Mostly expressed in vegetative tissues, including leaves, siliques, and stems, and flower buds, and, at lower levels, in roots and mature flowers.</text>
</comment>
<comment type="disruption phenotype">
    <text evidence="4 5">Lethal when homozygous. In hemizygous plants, male-specific transmission defect.</text>
</comment>
<comment type="similarity">
    <text evidence="9">Belongs to the VPS53 family.</text>
</comment>
<comment type="sequence caution" evidence="9">
    <conflict type="erroneous gene model prediction">
        <sequence resource="EMBL-CDS" id="AAF87884"/>
    </conflict>
</comment>
<comment type="sequence caution" evidence="9">
    <conflict type="erroneous gene model prediction">
        <sequence resource="EMBL-CDS" id="AAG51191"/>
    </conflict>
</comment>
<accession>Q0WQF4</accession>
<accession>F4I6I4</accession>
<accession>Q9C6Q3</accession>
<accession>Q9LPS3</accession>
<gene>
    <name type="primary">VPS53</name>
    <name type="synonym">HIT1</name>
    <name type="ordered locus">At1g50500</name>
    <name type="ORF">F11F12.15</name>
    <name type="ORF">F17J6.4</name>
</gene>
<name>VP53A_ARATH</name>
<reference key="1">
    <citation type="journal article" date="2000" name="Nature">
        <title>Sequence and analysis of chromosome 1 of the plant Arabidopsis thaliana.</title>
        <authorList>
            <person name="Theologis A."/>
            <person name="Ecker J.R."/>
            <person name="Palm C.J."/>
            <person name="Federspiel N.A."/>
            <person name="Kaul S."/>
            <person name="White O."/>
            <person name="Alonso J."/>
            <person name="Altafi H."/>
            <person name="Araujo R."/>
            <person name="Bowman C.L."/>
            <person name="Brooks S.Y."/>
            <person name="Buehler E."/>
            <person name="Chan A."/>
            <person name="Chao Q."/>
            <person name="Chen H."/>
            <person name="Cheuk R.F."/>
            <person name="Chin C.W."/>
            <person name="Chung M.K."/>
            <person name="Conn L."/>
            <person name="Conway A.B."/>
            <person name="Conway A.R."/>
            <person name="Creasy T.H."/>
            <person name="Dewar K."/>
            <person name="Dunn P."/>
            <person name="Etgu P."/>
            <person name="Feldblyum T.V."/>
            <person name="Feng J.-D."/>
            <person name="Fong B."/>
            <person name="Fujii C.Y."/>
            <person name="Gill J.E."/>
            <person name="Goldsmith A.D."/>
            <person name="Haas B."/>
            <person name="Hansen N.F."/>
            <person name="Hughes B."/>
            <person name="Huizar L."/>
            <person name="Hunter J.L."/>
            <person name="Jenkins J."/>
            <person name="Johnson-Hopson C."/>
            <person name="Khan S."/>
            <person name="Khaykin E."/>
            <person name="Kim C.J."/>
            <person name="Koo H.L."/>
            <person name="Kremenetskaia I."/>
            <person name="Kurtz D.B."/>
            <person name="Kwan A."/>
            <person name="Lam B."/>
            <person name="Langin-Hooper S."/>
            <person name="Lee A."/>
            <person name="Lee J.M."/>
            <person name="Lenz C.A."/>
            <person name="Li J.H."/>
            <person name="Li Y.-P."/>
            <person name="Lin X."/>
            <person name="Liu S.X."/>
            <person name="Liu Z.A."/>
            <person name="Luros J.S."/>
            <person name="Maiti R."/>
            <person name="Marziali A."/>
            <person name="Militscher J."/>
            <person name="Miranda M."/>
            <person name="Nguyen M."/>
            <person name="Nierman W.C."/>
            <person name="Osborne B.I."/>
            <person name="Pai G."/>
            <person name="Peterson J."/>
            <person name="Pham P.K."/>
            <person name="Rizzo M."/>
            <person name="Rooney T."/>
            <person name="Rowley D."/>
            <person name="Sakano H."/>
            <person name="Salzberg S.L."/>
            <person name="Schwartz J.R."/>
            <person name="Shinn P."/>
            <person name="Southwick A.M."/>
            <person name="Sun H."/>
            <person name="Tallon L.J."/>
            <person name="Tambunga G."/>
            <person name="Toriumi M.J."/>
            <person name="Town C.D."/>
            <person name="Utterback T."/>
            <person name="Van Aken S."/>
            <person name="Vaysberg M."/>
            <person name="Vysotskaia V.S."/>
            <person name="Walker M."/>
            <person name="Wu D."/>
            <person name="Yu G."/>
            <person name="Fraser C.M."/>
            <person name="Venter J.C."/>
            <person name="Davis R.W."/>
        </authorList>
    </citation>
    <scope>NUCLEOTIDE SEQUENCE [LARGE SCALE GENOMIC DNA]</scope>
    <source>
        <strain>cv. Columbia</strain>
    </source>
</reference>
<reference key="2">
    <citation type="journal article" date="2017" name="Plant J.">
        <title>Araport11: a complete reannotation of the Arabidopsis thaliana reference genome.</title>
        <authorList>
            <person name="Cheng C.Y."/>
            <person name="Krishnakumar V."/>
            <person name="Chan A.P."/>
            <person name="Thibaud-Nissen F."/>
            <person name="Schobel S."/>
            <person name="Town C.D."/>
        </authorList>
    </citation>
    <scope>GENOME REANNOTATION</scope>
    <source>
        <strain>cv. Columbia</strain>
    </source>
</reference>
<reference key="3">
    <citation type="submission" date="2006-07" db="EMBL/GenBank/DDBJ databases">
        <title>Large-scale analysis of RIKEN Arabidopsis full-length (RAFL) cDNAs.</title>
        <authorList>
            <person name="Totoki Y."/>
            <person name="Seki M."/>
            <person name="Ishida J."/>
            <person name="Nakajima M."/>
            <person name="Enju A."/>
            <person name="Kamiya A."/>
            <person name="Narusaka M."/>
            <person name="Shin-i T."/>
            <person name="Nakagawa M."/>
            <person name="Sakamoto N."/>
            <person name="Oishi K."/>
            <person name="Kohara Y."/>
            <person name="Kobayashi M."/>
            <person name="Toyoda A."/>
            <person name="Sakaki Y."/>
            <person name="Sakurai T."/>
            <person name="Iida K."/>
            <person name="Akiyama K."/>
            <person name="Satou M."/>
            <person name="Toyoda T."/>
            <person name="Konagaya A."/>
            <person name="Carninci P."/>
            <person name="Kawai J."/>
            <person name="Hayashizaki Y."/>
            <person name="Shinozaki K."/>
        </authorList>
    </citation>
    <scope>NUCLEOTIDE SEQUENCE [LARGE SCALE MRNA] (ISOFORM 1)</scope>
    <source>
        <strain>cv. Columbia</strain>
    </source>
</reference>
<reference key="4">
    <citation type="journal article" date="2000" name="J. Plant Physiol.">
        <title>Mutation in Arabidopsis HIT1 locus causing heat and osmotic hypersensitivity.</title>
        <authorList>
            <person name="Wu S.-J."/>
            <person name="Locy R.D."/>
            <person name="Shaw J.J."/>
            <person name="Cherry J.H."/>
            <person name="Singh N.K."/>
        </authorList>
    </citation>
    <scope>FUNCTION</scope>
    <scope>MUTAGENESIS OF SER-393</scope>
    <source>
        <strain>cv. Columbia GL1</strain>
    </source>
</reference>
<reference key="5">
    <citation type="journal article" date="2004" name="Plant Physiol.">
        <title>The putative Arabidopsis homolog of yeast vps52p is required for pollen tube elongation, localizes to Golgi, and might be involved in vesicle trafficking.</title>
        <authorList>
            <person name="Lobstein E."/>
            <person name="Guyon A."/>
            <person name="Ferault M."/>
            <person name="Twell D."/>
            <person name="Pelletier G."/>
            <person name="Bonhomme S."/>
        </authorList>
    </citation>
    <scope>TISSUE SPECIFICITY</scope>
    <scope>GENE FAMILY</scope>
    <scope>NOMENCLATURE</scope>
</reference>
<reference key="6">
    <citation type="journal article" date="2006" name="Planta">
        <title>Mutation in a homolog of yeast Vps53p accounts for the heat and osmotic hypersensitive phenotypes in Arabidopsis hit1-1 mutant.</title>
        <authorList>
            <person name="Lee C.-F."/>
            <person name="Pu H.-Y."/>
            <person name="Wang L.-C."/>
            <person name="Sayler R.J."/>
            <person name="Yeh C.-H."/>
            <person name="Wu S.-J."/>
        </authorList>
    </citation>
    <scope>FUNCTION</scope>
    <scope>MUTAGENESIS OF SER-393</scope>
    <scope>DISRUPTION PHENOTYPE</scope>
    <scope>TISSUE SPECIFICITY</scope>
    <source>
        <strain>cv. Columbia</strain>
    </source>
</reference>
<reference key="7">
    <citation type="journal article" date="2008" name="J. Exp. Bot.">
        <title>The POK/AtVPS52 protein localizes to several distinct post-Golgi compartments in sporophytic and gametophytic cells.</title>
        <authorList>
            <person name="Guermonprez H."/>
            <person name="Smertenko A."/>
            <person name="Crosnier M.-T."/>
            <person name="Durandet M."/>
            <person name="Vrielynck N."/>
            <person name="Guerche P."/>
            <person name="Hussey P.J."/>
            <person name="Satiat-Jeunemaitre B."/>
            <person name="Bonhomme S."/>
        </authorList>
    </citation>
    <scope>FUNCTION</scope>
    <scope>DISRUPTION PHENOTYPE</scope>
    <source>
        <strain>cv. Columbia</strain>
    </source>
</reference>
<reference key="8">
    <citation type="journal article" date="2011" name="J. Exp. Bot.">
        <title>Involvement of the Arabidopsis HIT1/AtVPS53 tethering protein homologue in the acclimation of the plasma membrane to heat stress.</title>
        <authorList>
            <person name="Wang L.-C."/>
            <person name="Tsai M.-C."/>
            <person name="Chang K.-Y."/>
            <person name="Fan Y.-S."/>
            <person name="Yeh C.-H."/>
            <person name="Wu S.-J."/>
        </authorList>
    </citation>
    <scope>FUNCTION</scope>
    <scope>MUTAGENESIS OF SER-393</scope>
    <scope>SUBCELLULAR LOCATION</scope>
    <scope>SUBUNIT</scope>
    <scope>INTERACTION WITH VPS52 AND VPS54</scope>
    <source>
        <strain>cv. Columbia</strain>
    </source>
</reference>
<reference key="9">
    <citation type="journal article" date="2011" name="Plant Signal. Behav.">
        <title>The Arabidopsis hit1-1 mutant has a plasma membrane profile distinct from that of wild-type plants at optimal growing temperature.</title>
        <authorList>
            <person name="Wang L.-C."/>
            <person name="Chang K.-Y."/>
            <person name="Ke Y.-T."/>
            <person name="Huang H.-Y."/>
            <person name="Wu S.-J."/>
        </authorList>
    </citation>
    <scope>FUNCTION</scope>
    <scope>MUTAGENESIS OF SER-393</scope>
    <source>
        <strain>cv. Columbia</strain>
    </source>
</reference>